<proteinExistence type="inferred from homology"/>
<dbReference type="EC" id="2.8.4.3" evidence="1"/>
<dbReference type="EMBL" id="BA000033">
    <property type="protein sequence ID" value="BAB95040.1"/>
    <property type="molecule type" value="Genomic_DNA"/>
</dbReference>
<dbReference type="RefSeq" id="WP_001001524.1">
    <property type="nucleotide sequence ID" value="NC_003923.1"/>
</dbReference>
<dbReference type="SMR" id="Q7A110"/>
<dbReference type="KEGG" id="sam:MW1175"/>
<dbReference type="HOGENOM" id="CLU_018697_2_0_9"/>
<dbReference type="GO" id="GO:0005829">
    <property type="term" value="C:cytosol"/>
    <property type="evidence" value="ECO:0007669"/>
    <property type="project" value="TreeGrafter"/>
</dbReference>
<dbReference type="GO" id="GO:0051539">
    <property type="term" value="F:4 iron, 4 sulfur cluster binding"/>
    <property type="evidence" value="ECO:0007669"/>
    <property type="project" value="UniProtKB-UniRule"/>
</dbReference>
<dbReference type="GO" id="GO:0046872">
    <property type="term" value="F:metal ion binding"/>
    <property type="evidence" value="ECO:0007669"/>
    <property type="project" value="UniProtKB-KW"/>
</dbReference>
<dbReference type="GO" id="GO:0035597">
    <property type="term" value="F:N6-isopentenyladenosine methylthiotransferase activity"/>
    <property type="evidence" value="ECO:0007669"/>
    <property type="project" value="TreeGrafter"/>
</dbReference>
<dbReference type="CDD" id="cd01335">
    <property type="entry name" value="Radical_SAM"/>
    <property type="match status" value="1"/>
</dbReference>
<dbReference type="FunFam" id="3.40.50.12160:FF:000006">
    <property type="entry name" value="tRNA-2-methylthio-N(6)-dimethylallyladenosine synthase"/>
    <property type="match status" value="1"/>
</dbReference>
<dbReference type="FunFam" id="3.80.30.20:FF:000001">
    <property type="entry name" value="tRNA-2-methylthio-N(6)-dimethylallyladenosine synthase 2"/>
    <property type="match status" value="1"/>
</dbReference>
<dbReference type="Gene3D" id="3.40.50.12160">
    <property type="entry name" value="Methylthiotransferase, N-terminal domain"/>
    <property type="match status" value="1"/>
</dbReference>
<dbReference type="Gene3D" id="3.80.30.20">
    <property type="entry name" value="tm_1862 like domain"/>
    <property type="match status" value="1"/>
</dbReference>
<dbReference type="HAMAP" id="MF_01864">
    <property type="entry name" value="tRNA_metthiotr_MiaB"/>
    <property type="match status" value="1"/>
</dbReference>
<dbReference type="InterPro" id="IPR006638">
    <property type="entry name" value="Elp3/MiaA/NifB-like_rSAM"/>
</dbReference>
<dbReference type="InterPro" id="IPR005839">
    <property type="entry name" value="Methylthiotransferase"/>
</dbReference>
<dbReference type="InterPro" id="IPR020612">
    <property type="entry name" value="Methylthiotransferase_CS"/>
</dbReference>
<dbReference type="InterPro" id="IPR013848">
    <property type="entry name" value="Methylthiotransferase_N"/>
</dbReference>
<dbReference type="InterPro" id="IPR038135">
    <property type="entry name" value="Methylthiotransferase_N_sf"/>
</dbReference>
<dbReference type="InterPro" id="IPR006463">
    <property type="entry name" value="MiaB_methiolase"/>
</dbReference>
<dbReference type="InterPro" id="IPR007197">
    <property type="entry name" value="rSAM"/>
</dbReference>
<dbReference type="InterPro" id="IPR023404">
    <property type="entry name" value="rSAM_horseshoe"/>
</dbReference>
<dbReference type="InterPro" id="IPR002792">
    <property type="entry name" value="TRAM_dom"/>
</dbReference>
<dbReference type="NCBIfam" id="TIGR01574">
    <property type="entry name" value="miaB-methiolase"/>
    <property type="match status" value="1"/>
</dbReference>
<dbReference type="NCBIfam" id="TIGR00089">
    <property type="entry name" value="MiaB/RimO family radical SAM methylthiotransferase"/>
    <property type="match status" value="1"/>
</dbReference>
<dbReference type="PANTHER" id="PTHR43020">
    <property type="entry name" value="CDK5 REGULATORY SUBUNIT-ASSOCIATED PROTEIN 1"/>
    <property type="match status" value="1"/>
</dbReference>
<dbReference type="PANTHER" id="PTHR43020:SF2">
    <property type="entry name" value="MITOCHONDRIAL TRNA METHYLTHIOTRANSFERASE CDK5RAP1"/>
    <property type="match status" value="1"/>
</dbReference>
<dbReference type="Pfam" id="PF04055">
    <property type="entry name" value="Radical_SAM"/>
    <property type="match status" value="1"/>
</dbReference>
<dbReference type="Pfam" id="PF01938">
    <property type="entry name" value="TRAM"/>
    <property type="match status" value="1"/>
</dbReference>
<dbReference type="Pfam" id="PF00919">
    <property type="entry name" value="UPF0004"/>
    <property type="match status" value="1"/>
</dbReference>
<dbReference type="SFLD" id="SFLDF00273">
    <property type="entry name" value="(dimethylallyl)adenosine_tRNA"/>
    <property type="match status" value="1"/>
</dbReference>
<dbReference type="SFLD" id="SFLDG01082">
    <property type="entry name" value="B12-binding_domain_containing"/>
    <property type="match status" value="1"/>
</dbReference>
<dbReference type="SFLD" id="SFLDS00029">
    <property type="entry name" value="Radical_SAM"/>
    <property type="match status" value="1"/>
</dbReference>
<dbReference type="SMART" id="SM00729">
    <property type="entry name" value="Elp3"/>
    <property type="match status" value="1"/>
</dbReference>
<dbReference type="SUPFAM" id="SSF102114">
    <property type="entry name" value="Radical SAM enzymes"/>
    <property type="match status" value="1"/>
</dbReference>
<dbReference type="PROSITE" id="PS51449">
    <property type="entry name" value="MTTASE_N"/>
    <property type="match status" value="1"/>
</dbReference>
<dbReference type="PROSITE" id="PS01278">
    <property type="entry name" value="MTTASE_RADICAL"/>
    <property type="match status" value="1"/>
</dbReference>
<dbReference type="PROSITE" id="PS51918">
    <property type="entry name" value="RADICAL_SAM"/>
    <property type="match status" value="1"/>
</dbReference>
<dbReference type="PROSITE" id="PS50926">
    <property type="entry name" value="TRAM"/>
    <property type="match status" value="1"/>
</dbReference>
<protein>
    <recommendedName>
        <fullName evidence="1">tRNA-2-methylthio-N(6)-dimethylallyladenosine synthase</fullName>
        <ecNumber evidence="1">2.8.4.3</ecNumber>
    </recommendedName>
    <alternativeName>
        <fullName evidence="1">(Dimethylallyl)adenosine tRNA methylthiotransferase MiaB</fullName>
    </alternativeName>
    <alternativeName>
        <fullName evidence="1">tRNA-i(6)A37 methylthiotransferase</fullName>
    </alternativeName>
</protein>
<comment type="function">
    <text evidence="1">Catalyzes the methylthiolation of N6-(dimethylallyl)adenosine (i(6)A), leading to the formation of 2-methylthio-N6-(dimethylallyl)adenosine (ms(2)i(6)A) at position 37 in tRNAs that read codons beginning with uridine.</text>
</comment>
<comment type="catalytic activity">
    <reaction evidence="1">
        <text>N(6)-dimethylallyladenosine(37) in tRNA + (sulfur carrier)-SH + AH2 + 2 S-adenosyl-L-methionine = 2-methylsulfanyl-N(6)-dimethylallyladenosine(37) in tRNA + (sulfur carrier)-H + 5'-deoxyadenosine + L-methionine + A + S-adenosyl-L-homocysteine + 2 H(+)</text>
        <dbReference type="Rhea" id="RHEA:37067"/>
        <dbReference type="Rhea" id="RHEA-COMP:10375"/>
        <dbReference type="Rhea" id="RHEA-COMP:10376"/>
        <dbReference type="Rhea" id="RHEA-COMP:14737"/>
        <dbReference type="Rhea" id="RHEA-COMP:14739"/>
        <dbReference type="ChEBI" id="CHEBI:13193"/>
        <dbReference type="ChEBI" id="CHEBI:15378"/>
        <dbReference type="ChEBI" id="CHEBI:17319"/>
        <dbReference type="ChEBI" id="CHEBI:17499"/>
        <dbReference type="ChEBI" id="CHEBI:29917"/>
        <dbReference type="ChEBI" id="CHEBI:57844"/>
        <dbReference type="ChEBI" id="CHEBI:57856"/>
        <dbReference type="ChEBI" id="CHEBI:59789"/>
        <dbReference type="ChEBI" id="CHEBI:64428"/>
        <dbReference type="ChEBI" id="CHEBI:74415"/>
        <dbReference type="ChEBI" id="CHEBI:74417"/>
        <dbReference type="EC" id="2.8.4.3"/>
    </reaction>
</comment>
<comment type="cofactor">
    <cofactor evidence="1">
        <name>[4Fe-4S] cluster</name>
        <dbReference type="ChEBI" id="CHEBI:49883"/>
    </cofactor>
    <text evidence="1">Binds 2 [4Fe-4S] clusters. One cluster is coordinated with 3 cysteines and an exchangeable S-adenosyl-L-methionine.</text>
</comment>
<comment type="subunit">
    <text evidence="1">Monomer.</text>
</comment>
<comment type="subcellular location">
    <subcellularLocation>
        <location evidence="1">Cytoplasm</location>
    </subcellularLocation>
</comment>
<comment type="similarity">
    <text evidence="1">Belongs to the methylthiotransferase family. MiaB subfamily.</text>
</comment>
<sequence>MNEEQRKASSVDVLAERDKKAEKDYSKYFEHVYQPPNLKEAKKRGKQEVRYNRDFQIDEKYRGMGNERTFLIKTYGCQMNAHDTEVIAGILEALGYQATTDINTADVILINTCAIRENAENKVFSEIGNLKHLKKERPDILIGVCGCMSQEESVVNKILKSYQNVDMIFGTHNIHHLPEILEEAYLSKAMVVEVWSKEGDVIENLPKVREGNIKAWVNIMYGCDKFCTYCIVPFTRGKERSRRPEDIIDEVRELAREGYKEITLLGQNVNSYGKDLQDIEYDLGDLLQAISKIAIPRVRFTTSHPWDFTDHMIDVISEGGNIVPHIHLPVQSGNNAVLKIMGRKYTRESYLDLVKRIKDRIPNVALTTDIIVGYPNESEEQFEETLTLYDEVGFEHAYTYLYSQRDGTPAAKMKDNVPLNVKKERLQRLNKKVGHYSQIAMSKYEGQTVTVLCEGSSKKDDQVLAGYTDKNKLVNFKAPKEMIGKLVEVRIDEAKQYSLNGSFVKEVEPEMVIQ</sequence>
<evidence type="ECO:0000255" key="1">
    <source>
        <dbReference type="HAMAP-Rule" id="MF_01864"/>
    </source>
</evidence>
<evidence type="ECO:0000255" key="2">
    <source>
        <dbReference type="PROSITE-ProRule" id="PRU01266"/>
    </source>
</evidence>
<evidence type="ECO:0000256" key="3">
    <source>
        <dbReference type="SAM" id="MobiDB-lite"/>
    </source>
</evidence>
<keyword id="KW-0004">4Fe-4S</keyword>
<keyword id="KW-0963">Cytoplasm</keyword>
<keyword id="KW-0408">Iron</keyword>
<keyword id="KW-0411">Iron-sulfur</keyword>
<keyword id="KW-0479">Metal-binding</keyword>
<keyword id="KW-0949">S-adenosyl-L-methionine</keyword>
<keyword id="KW-0808">Transferase</keyword>
<keyword id="KW-0819">tRNA processing</keyword>
<feature type="chain" id="PRO_0000374572" description="tRNA-2-methylthio-N(6)-dimethylallyladenosine synthase">
    <location>
        <begin position="1"/>
        <end position="514"/>
    </location>
</feature>
<feature type="domain" description="MTTase N-terminal" evidence="1">
    <location>
        <begin position="68"/>
        <end position="186"/>
    </location>
</feature>
<feature type="domain" description="Radical SAM core" evidence="2">
    <location>
        <begin position="209"/>
        <end position="440"/>
    </location>
</feature>
<feature type="domain" description="TRAM" evidence="1">
    <location>
        <begin position="442"/>
        <end position="505"/>
    </location>
</feature>
<feature type="region of interest" description="Disordered" evidence="3">
    <location>
        <begin position="1"/>
        <end position="21"/>
    </location>
</feature>
<feature type="binding site" evidence="1">
    <location>
        <position position="77"/>
    </location>
    <ligand>
        <name>[4Fe-4S] cluster</name>
        <dbReference type="ChEBI" id="CHEBI:49883"/>
        <label>1</label>
    </ligand>
</feature>
<feature type="binding site" evidence="1">
    <location>
        <position position="113"/>
    </location>
    <ligand>
        <name>[4Fe-4S] cluster</name>
        <dbReference type="ChEBI" id="CHEBI:49883"/>
        <label>1</label>
    </ligand>
</feature>
<feature type="binding site" evidence="1">
    <location>
        <position position="147"/>
    </location>
    <ligand>
        <name>[4Fe-4S] cluster</name>
        <dbReference type="ChEBI" id="CHEBI:49883"/>
        <label>1</label>
    </ligand>
</feature>
<feature type="binding site" evidence="1">
    <location>
        <position position="223"/>
    </location>
    <ligand>
        <name>[4Fe-4S] cluster</name>
        <dbReference type="ChEBI" id="CHEBI:49883"/>
        <label>2</label>
        <note>4Fe-4S-S-AdoMet</note>
    </ligand>
</feature>
<feature type="binding site" evidence="1">
    <location>
        <position position="227"/>
    </location>
    <ligand>
        <name>[4Fe-4S] cluster</name>
        <dbReference type="ChEBI" id="CHEBI:49883"/>
        <label>2</label>
        <note>4Fe-4S-S-AdoMet</note>
    </ligand>
</feature>
<feature type="binding site" evidence="1">
    <location>
        <position position="230"/>
    </location>
    <ligand>
        <name>[4Fe-4S] cluster</name>
        <dbReference type="ChEBI" id="CHEBI:49883"/>
        <label>2</label>
        <note>4Fe-4S-S-AdoMet</note>
    </ligand>
</feature>
<accession>Q7A110</accession>
<organism>
    <name type="scientific">Staphylococcus aureus (strain MW2)</name>
    <dbReference type="NCBI Taxonomy" id="196620"/>
    <lineage>
        <taxon>Bacteria</taxon>
        <taxon>Bacillati</taxon>
        <taxon>Bacillota</taxon>
        <taxon>Bacilli</taxon>
        <taxon>Bacillales</taxon>
        <taxon>Staphylococcaceae</taxon>
        <taxon>Staphylococcus</taxon>
    </lineage>
</organism>
<gene>
    <name evidence="1" type="primary">miaB</name>
    <name type="ordered locus">MW1175</name>
</gene>
<name>MIAB_STAAW</name>
<reference key="1">
    <citation type="journal article" date="2002" name="Lancet">
        <title>Genome and virulence determinants of high virulence community-acquired MRSA.</title>
        <authorList>
            <person name="Baba T."/>
            <person name="Takeuchi F."/>
            <person name="Kuroda M."/>
            <person name="Yuzawa H."/>
            <person name="Aoki K."/>
            <person name="Oguchi A."/>
            <person name="Nagai Y."/>
            <person name="Iwama N."/>
            <person name="Asano K."/>
            <person name="Naimi T."/>
            <person name="Kuroda H."/>
            <person name="Cui L."/>
            <person name="Yamamoto K."/>
            <person name="Hiramatsu K."/>
        </authorList>
    </citation>
    <scope>NUCLEOTIDE SEQUENCE [LARGE SCALE GENOMIC DNA]</scope>
    <source>
        <strain>MW2</strain>
    </source>
</reference>